<organism>
    <name type="scientific">Bothrops jararaca</name>
    <name type="common">Jararaca</name>
    <name type="synonym">Bothrops jajaraca</name>
    <dbReference type="NCBI Taxonomy" id="8724"/>
    <lineage>
        <taxon>Eukaryota</taxon>
        <taxon>Metazoa</taxon>
        <taxon>Chordata</taxon>
        <taxon>Craniata</taxon>
        <taxon>Vertebrata</taxon>
        <taxon>Euteleostomi</taxon>
        <taxon>Lepidosauria</taxon>
        <taxon>Squamata</taxon>
        <taxon>Bifurcata</taxon>
        <taxon>Unidentata</taxon>
        <taxon>Episquamata</taxon>
        <taxon>Toxicofera</taxon>
        <taxon>Serpentes</taxon>
        <taxon>Colubroidea</taxon>
        <taxon>Viperidae</taxon>
        <taxon>Crotalinae</taxon>
        <taxon>Bothrops</taxon>
    </lineage>
</organism>
<comment type="function">
    <text evidence="1 3 4 5">Catalyzes an oxidative deamination of predominantly hydrophobic and aromatic L-amino acids, thus producing hydrogen peroxide that may contribute to the diverse toxic effects of this enzyme (PubMed:18346051). Is highly active on L-Leu, L-Met, moderately active on L-Arg, L-Trp, L-Phe, L-Val, L-His, and L-Ile, and is weakly or not active on L-Cys, L-Lys, L-Ala, L-Thr, L-Asp, L-Ser, and L-Pro (PubMed:18346051, PubMed:19101583). Exhibits diverse biological activities, such as hemorrhage, edema, apoptosis of vascular endothelial cells or tumor cell lines, as well as regulation of platelet aggregation. Effects of snake L-amino oxidases on platelets are controversial, since they either induce aggregation or inhibit agonist-induced aggregation. These different effects are probably due to different experimental conditions (By similarity). This protein induce hemolysis and has antibacterial and antiparasitic activities (against the Gram-positive S.aureus). Tested in vivo, this protein significantly inhibits Ehrlich ascite tumors growth and induces an influx of polymorphonuclear cells, as well as spontaneous liberation of hydrogen peroxide from peritoneal macrophages.</text>
</comment>
<comment type="catalytic activity">
    <reaction evidence="3 4">
        <text>an L-alpha-amino acid + O2 + H2O = a 2-oxocarboxylate + H2O2 + NH4(+)</text>
        <dbReference type="Rhea" id="RHEA:13781"/>
        <dbReference type="ChEBI" id="CHEBI:15377"/>
        <dbReference type="ChEBI" id="CHEBI:15379"/>
        <dbReference type="ChEBI" id="CHEBI:16240"/>
        <dbReference type="ChEBI" id="CHEBI:28938"/>
        <dbReference type="ChEBI" id="CHEBI:35179"/>
        <dbReference type="ChEBI" id="CHEBI:59869"/>
        <dbReference type="EC" id="1.4.3.2"/>
    </reaction>
</comment>
<comment type="catalytic activity">
    <reaction evidence="3 4">
        <text>L-leucine + O2 + H2O = 4-methyl-2-oxopentanoate + H2O2 + NH4(+)</text>
        <dbReference type="Rhea" id="RHEA:60996"/>
        <dbReference type="ChEBI" id="CHEBI:15377"/>
        <dbReference type="ChEBI" id="CHEBI:15379"/>
        <dbReference type="ChEBI" id="CHEBI:16240"/>
        <dbReference type="ChEBI" id="CHEBI:17865"/>
        <dbReference type="ChEBI" id="CHEBI:28938"/>
        <dbReference type="ChEBI" id="CHEBI:57427"/>
    </reaction>
</comment>
<comment type="catalytic activity">
    <reaction evidence="3 4">
        <text>L-phenylalanine + O2 + H2O = 3-phenylpyruvate + H2O2 + NH4(+)</text>
        <dbReference type="Rhea" id="RHEA:61240"/>
        <dbReference type="ChEBI" id="CHEBI:15377"/>
        <dbReference type="ChEBI" id="CHEBI:15379"/>
        <dbReference type="ChEBI" id="CHEBI:16240"/>
        <dbReference type="ChEBI" id="CHEBI:18005"/>
        <dbReference type="ChEBI" id="CHEBI:28938"/>
        <dbReference type="ChEBI" id="CHEBI:58095"/>
    </reaction>
</comment>
<comment type="catalytic activity">
    <reaction evidence="3 4">
        <text>L-tryptophan + O2 + H2O = indole-3-pyruvate + H2O2 + NH4(+)</text>
        <dbReference type="Rhea" id="RHEA:61244"/>
        <dbReference type="ChEBI" id="CHEBI:15377"/>
        <dbReference type="ChEBI" id="CHEBI:15379"/>
        <dbReference type="ChEBI" id="CHEBI:16240"/>
        <dbReference type="ChEBI" id="CHEBI:17640"/>
        <dbReference type="ChEBI" id="CHEBI:28938"/>
        <dbReference type="ChEBI" id="CHEBI:57912"/>
    </reaction>
</comment>
<comment type="catalytic activity">
    <reaction evidence="3 4">
        <text>L-methionine + O2 + H2O = 4-methylsulfanyl-2-oxobutanoate + H2O2 + NH4(+)</text>
        <dbReference type="Rhea" id="RHEA:61236"/>
        <dbReference type="ChEBI" id="CHEBI:15377"/>
        <dbReference type="ChEBI" id="CHEBI:15379"/>
        <dbReference type="ChEBI" id="CHEBI:16240"/>
        <dbReference type="ChEBI" id="CHEBI:16723"/>
        <dbReference type="ChEBI" id="CHEBI:28938"/>
        <dbReference type="ChEBI" id="CHEBI:57844"/>
    </reaction>
</comment>
<comment type="catalytic activity">
    <reaction evidence="3 4">
        <text>L-isoleucine + O2 + H2O = (S)-3-methyl-2-oxopentanoate + H2O2 + NH4(+)</text>
        <dbReference type="Rhea" id="RHEA:61232"/>
        <dbReference type="ChEBI" id="CHEBI:15377"/>
        <dbReference type="ChEBI" id="CHEBI:15379"/>
        <dbReference type="ChEBI" id="CHEBI:16240"/>
        <dbReference type="ChEBI" id="CHEBI:28938"/>
        <dbReference type="ChEBI" id="CHEBI:35146"/>
        <dbReference type="ChEBI" id="CHEBI:58045"/>
    </reaction>
</comment>
<comment type="catalytic activity">
    <reaction evidence="3 4">
        <text>L-arginine + O2 + H2O = 5-guanidino-2-oxopentanoate + H2O2 + NH4(+)</text>
        <dbReference type="Rhea" id="RHEA:51404"/>
        <dbReference type="ChEBI" id="CHEBI:15377"/>
        <dbReference type="ChEBI" id="CHEBI:15379"/>
        <dbReference type="ChEBI" id="CHEBI:16240"/>
        <dbReference type="ChEBI" id="CHEBI:28938"/>
        <dbReference type="ChEBI" id="CHEBI:32682"/>
        <dbReference type="ChEBI" id="CHEBI:58489"/>
    </reaction>
</comment>
<comment type="catalytic activity">
    <reaction evidence="3 4">
        <text>L-histidine + O2 + H2O = 3-(imidazol-5-yl)pyruvate + H2O2 + NH4(+)</text>
        <dbReference type="Rhea" id="RHEA:61228"/>
        <dbReference type="ChEBI" id="CHEBI:15377"/>
        <dbReference type="ChEBI" id="CHEBI:15379"/>
        <dbReference type="ChEBI" id="CHEBI:16240"/>
        <dbReference type="ChEBI" id="CHEBI:28938"/>
        <dbReference type="ChEBI" id="CHEBI:57595"/>
        <dbReference type="ChEBI" id="CHEBI:58133"/>
    </reaction>
</comment>
<comment type="catalytic activity">
    <reaction evidence="3 4">
        <text>L-valine + O2 + H2O = 3-methyl-2-oxobutanoate + H2O2 + NH4(+)</text>
        <dbReference type="Rhea" id="RHEA:61252"/>
        <dbReference type="ChEBI" id="CHEBI:11851"/>
        <dbReference type="ChEBI" id="CHEBI:15377"/>
        <dbReference type="ChEBI" id="CHEBI:15379"/>
        <dbReference type="ChEBI" id="CHEBI:16240"/>
        <dbReference type="ChEBI" id="CHEBI:28938"/>
        <dbReference type="ChEBI" id="CHEBI:57762"/>
    </reaction>
</comment>
<comment type="cofactor">
    <cofactor evidence="2">
        <name>FAD</name>
        <dbReference type="ChEBI" id="CHEBI:57692"/>
    </cofactor>
</comment>
<comment type="subunit">
    <text evidence="3">Homodimer; non-covalently linked.</text>
</comment>
<comment type="subcellular location">
    <subcellularLocation>
        <location evidence="3 4">Secreted</location>
    </subcellularLocation>
</comment>
<comment type="tissue specificity">
    <text evidence="8 9">Expressed by the venom gland.</text>
</comment>
<comment type="PTM">
    <text evidence="4">N-Glycosylated.</text>
</comment>
<comment type="miscellaneous">
    <text evidence="4 5">Has parasiticidal activities against both trypanosomes and leishmania, as a result of enzyme-catalyzed hydrogen peroxide production (PubMed:19101583, PubMed:20615423).</text>
</comment>
<comment type="similarity">
    <text evidence="7">Belongs to the flavin monoamine oxidase family. FIG1 subfamily.</text>
</comment>
<comment type="caution">
    <text evidence="8">Bothrops jararaca venom seems to contain 2 isoforms with different hydrophobic properties (PubMed:18346051). These isoforms may reflect different glycosylation of the protein or they may have been synthesized from different genes.</text>
</comment>
<accession>P0DI88</accession>
<sequence>ADDKNPLEECFRETDYEEFLEIARNGLKATSNPKRVV</sequence>
<reference key="1">
    <citation type="journal article" date="2008" name="Basic Clin. Pharmacol. Toxicol.">
        <title>Antitumoural effect of an L-amino acid oxidase isolated from Bothrops jararaca snake venom.</title>
        <authorList>
            <person name="de Vieira Santos M.M."/>
            <person name="Sant'Ana C.D."/>
            <person name="Giglio J.R."/>
            <person name="da Silva R.J."/>
            <person name="Sampaio S.V."/>
            <person name="Soares A.M."/>
            <person name="Fecchio D."/>
        </authorList>
    </citation>
    <scope>PROTEIN SEQUENCE</scope>
    <scope>FUNCTION</scope>
    <scope>SUBUNIT</scope>
    <scope>SUBCELLULAR LOCATION</scope>
    <scope>CATALYTIC ACTIVITY</scope>
    <scope>SUBSTRATE SPECIFICITY</scope>
    <source>
        <tissue>Venom</tissue>
    </source>
</reference>
<reference key="2">
    <citation type="journal article" date="2009" name="Toxicon">
        <title>Antigenic, microbicidal and antiparasitic properties of an L-amino acid oxidase isolated from Bothrops jararaca snake venom.</title>
        <authorList>
            <person name="Ciscotto P."/>
            <person name="Machado de Avila R.A."/>
            <person name="Coelho E.A."/>
            <person name="Oliveira J."/>
            <person name="Diniz C.G."/>
            <person name="Farias L.M."/>
            <person name="de Carvalho M.A."/>
            <person name="Maria W.S."/>
            <person name="Sanchez E.F."/>
            <person name="Borges A."/>
            <person name="Chavez-Olortegui C."/>
        </authorList>
    </citation>
    <scope>FUNCTION</scope>
    <scope>CATALYTIC ACTIVITY</scope>
    <scope>GLYCOSYLATION</scope>
    <scope>SUBCELLULAR LOCATION</scope>
    <scope>SUBSTRATE SPECIFICITY</scope>
    <source>
        <tissue>Venom</tissue>
    </source>
</reference>
<reference key="3">
    <citation type="journal article" date="2010" name="Toxicon">
        <title>L-amino acid oxidase activity present in fractions of Bothrops jararaca venom is responsible for the induction of programmed cell death in Trypanosoma cruzi.</title>
        <authorList>
            <person name="Deolindo P."/>
            <person name="Teixeira-Ferreira A.S."/>
            <person name="DaMatta R.A."/>
            <person name="Alves E.W."/>
        </authorList>
    </citation>
    <scope>FUNCTION</scope>
    <source>
        <tissue>Venom</tissue>
    </source>
</reference>
<feature type="chain" id="PRO_0000412595" description="L-amino-acid oxidase">
    <location>
        <begin position="1"/>
        <end position="37" status="greater than"/>
    </location>
</feature>
<feature type="disulfide bond" evidence="2">
    <location>
        <begin position="10"/>
        <end status="unknown"/>
    </location>
</feature>
<feature type="non-terminal residue" evidence="6">
    <location>
        <position position="37"/>
    </location>
</feature>
<dbReference type="EC" id="1.4.3.2" evidence="3 4"/>
<dbReference type="SMR" id="P0DI88"/>
<dbReference type="GO" id="GO:0005576">
    <property type="term" value="C:extracellular region"/>
    <property type="evidence" value="ECO:0007669"/>
    <property type="project" value="UniProtKB-SubCell"/>
</dbReference>
<dbReference type="GO" id="GO:0106329">
    <property type="term" value="F:L-phenylalaine oxidase activity"/>
    <property type="evidence" value="ECO:0007669"/>
    <property type="project" value="RHEA"/>
</dbReference>
<dbReference type="GO" id="GO:0090729">
    <property type="term" value="F:toxin activity"/>
    <property type="evidence" value="ECO:0007669"/>
    <property type="project" value="UniProtKB-KW"/>
</dbReference>
<dbReference type="GO" id="GO:0006915">
    <property type="term" value="P:apoptotic process"/>
    <property type="evidence" value="ECO:0007669"/>
    <property type="project" value="UniProtKB-KW"/>
</dbReference>
<dbReference type="GO" id="GO:0042742">
    <property type="term" value="P:defense response to bacterium"/>
    <property type="evidence" value="ECO:0007669"/>
    <property type="project" value="UniProtKB-KW"/>
</dbReference>
<dbReference type="GO" id="GO:0031640">
    <property type="term" value="P:killing of cells of another organism"/>
    <property type="evidence" value="ECO:0007669"/>
    <property type="project" value="UniProtKB-KW"/>
</dbReference>
<dbReference type="Gene3D" id="3.90.660.10">
    <property type="match status" value="1"/>
</dbReference>
<proteinExistence type="evidence at protein level"/>
<name>OXLA_BOTJA</name>
<evidence type="ECO:0000250" key="1">
    <source>
        <dbReference type="UniProtKB" id="P0CC17"/>
    </source>
</evidence>
<evidence type="ECO:0000250" key="2">
    <source>
        <dbReference type="UniProtKB" id="P81382"/>
    </source>
</evidence>
<evidence type="ECO:0000269" key="3">
    <source>
    </source>
</evidence>
<evidence type="ECO:0000269" key="4">
    <source>
    </source>
</evidence>
<evidence type="ECO:0000269" key="5">
    <source>
    </source>
</evidence>
<evidence type="ECO:0000303" key="6">
    <source>
    </source>
</evidence>
<evidence type="ECO:0000305" key="7"/>
<evidence type="ECO:0000305" key="8">
    <source>
    </source>
</evidence>
<evidence type="ECO:0000305" key="9">
    <source>
    </source>
</evidence>
<keyword id="KW-0044">Antibiotic</keyword>
<keyword id="KW-0929">Antimicrobial</keyword>
<keyword id="KW-0053">Apoptosis</keyword>
<keyword id="KW-0204">Cytolysis</keyword>
<keyword id="KW-0903">Direct protein sequencing</keyword>
<keyword id="KW-1015">Disulfide bond</keyword>
<keyword id="KW-0274">FAD</keyword>
<keyword id="KW-0285">Flavoprotein</keyword>
<keyword id="KW-0325">Glycoprotein</keyword>
<keyword id="KW-0354">Hemolysis</keyword>
<keyword id="KW-1199">Hemostasis impairing toxin</keyword>
<keyword id="KW-0560">Oxidoreductase</keyword>
<keyword id="KW-0964">Secreted</keyword>
<keyword id="KW-0800">Toxin</keyword>
<protein>
    <recommendedName>
        <fullName>L-amino-acid oxidase</fullName>
        <shortName evidence="6">BjarLAAO-I</shortName>
        <shortName>LAO</shortName>
        <ecNumber evidence="3 4">1.4.3.2</ecNumber>
    </recommendedName>
</protein>